<evidence type="ECO:0000255" key="1">
    <source>
        <dbReference type="HAMAP-Rule" id="MF_00173"/>
    </source>
</evidence>
<sequence>MTKSYRQGQILKLIRGKRIGTQDELAQELKSQGIAATQVTLSRDIRDLRLVKTREGYKEMAEEEQGPQFSLLAGEFLRDVLRAQNLVVLKTSPGHANSVAVALDNEEWPEVVGTIAGDDTILVIAPDTPTAEAVQEKLLGLLEHQ</sequence>
<comment type="function">
    <text evidence="1">Regulates arginine biosynthesis genes.</text>
</comment>
<comment type="pathway">
    <text>Amino-acid biosynthesis; L-arginine biosynthesis [regulation].</text>
</comment>
<comment type="subcellular location">
    <subcellularLocation>
        <location evidence="1">Cytoplasm</location>
    </subcellularLocation>
</comment>
<comment type="similarity">
    <text evidence="1">Belongs to the ArgR family.</text>
</comment>
<name>ARGR_SOLUE</name>
<keyword id="KW-0028">Amino-acid biosynthesis</keyword>
<keyword id="KW-0055">Arginine biosynthesis</keyword>
<keyword id="KW-0963">Cytoplasm</keyword>
<keyword id="KW-0238">DNA-binding</keyword>
<keyword id="KW-0678">Repressor</keyword>
<keyword id="KW-0804">Transcription</keyword>
<keyword id="KW-0805">Transcription regulation</keyword>
<dbReference type="EMBL" id="CP000473">
    <property type="protein sequence ID" value="ABJ83492.1"/>
    <property type="molecule type" value="Genomic_DNA"/>
</dbReference>
<dbReference type="SMR" id="Q024T4"/>
<dbReference type="FunCoup" id="Q024T4">
    <property type="interactions" value="82"/>
</dbReference>
<dbReference type="STRING" id="234267.Acid_2503"/>
<dbReference type="KEGG" id="sus:Acid_2503"/>
<dbReference type="eggNOG" id="COG1438">
    <property type="taxonomic scope" value="Bacteria"/>
</dbReference>
<dbReference type="HOGENOM" id="CLU_097103_3_0_0"/>
<dbReference type="InParanoid" id="Q024T4"/>
<dbReference type="OrthoDB" id="9807089at2"/>
<dbReference type="UniPathway" id="UPA00068"/>
<dbReference type="GO" id="GO:0005737">
    <property type="term" value="C:cytoplasm"/>
    <property type="evidence" value="ECO:0007669"/>
    <property type="project" value="UniProtKB-SubCell"/>
</dbReference>
<dbReference type="GO" id="GO:0034618">
    <property type="term" value="F:arginine binding"/>
    <property type="evidence" value="ECO:0007669"/>
    <property type="project" value="InterPro"/>
</dbReference>
<dbReference type="GO" id="GO:0003677">
    <property type="term" value="F:DNA binding"/>
    <property type="evidence" value="ECO:0007669"/>
    <property type="project" value="UniProtKB-KW"/>
</dbReference>
<dbReference type="GO" id="GO:0003700">
    <property type="term" value="F:DNA-binding transcription factor activity"/>
    <property type="evidence" value="ECO:0007669"/>
    <property type="project" value="UniProtKB-UniRule"/>
</dbReference>
<dbReference type="GO" id="GO:0006526">
    <property type="term" value="P:L-arginine biosynthetic process"/>
    <property type="evidence" value="ECO:0007669"/>
    <property type="project" value="UniProtKB-UniPathway"/>
</dbReference>
<dbReference type="GO" id="GO:0051259">
    <property type="term" value="P:protein complex oligomerization"/>
    <property type="evidence" value="ECO:0007669"/>
    <property type="project" value="InterPro"/>
</dbReference>
<dbReference type="GO" id="GO:1900079">
    <property type="term" value="P:regulation of arginine biosynthetic process"/>
    <property type="evidence" value="ECO:0007669"/>
    <property type="project" value="UniProtKB-UniRule"/>
</dbReference>
<dbReference type="Gene3D" id="3.30.1360.40">
    <property type="match status" value="1"/>
</dbReference>
<dbReference type="Gene3D" id="1.10.10.10">
    <property type="entry name" value="Winged helix-like DNA-binding domain superfamily/Winged helix DNA-binding domain"/>
    <property type="match status" value="1"/>
</dbReference>
<dbReference type="HAMAP" id="MF_00173">
    <property type="entry name" value="Arg_repressor"/>
    <property type="match status" value="1"/>
</dbReference>
<dbReference type="InterPro" id="IPR001669">
    <property type="entry name" value="Arg_repress"/>
</dbReference>
<dbReference type="InterPro" id="IPR020899">
    <property type="entry name" value="Arg_repress_C"/>
</dbReference>
<dbReference type="InterPro" id="IPR036251">
    <property type="entry name" value="Arg_repress_C_sf"/>
</dbReference>
<dbReference type="InterPro" id="IPR020900">
    <property type="entry name" value="Arg_repress_DNA-bd"/>
</dbReference>
<dbReference type="InterPro" id="IPR036388">
    <property type="entry name" value="WH-like_DNA-bd_sf"/>
</dbReference>
<dbReference type="InterPro" id="IPR036390">
    <property type="entry name" value="WH_DNA-bd_sf"/>
</dbReference>
<dbReference type="NCBIfam" id="TIGR01529">
    <property type="entry name" value="argR_whole"/>
    <property type="match status" value="1"/>
</dbReference>
<dbReference type="PANTHER" id="PTHR34471">
    <property type="entry name" value="ARGININE REPRESSOR"/>
    <property type="match status" value="1"/>
</dbReference>
<dbReference type="PANTHER" id="PTHR34471:SF1">
    <property type="entry name" value="ARGININE REPRESSOR"/>
    <property type="match status" value="1"/>
</dbReference>
<dbReference type="Pfam" id="PF01316">
    <property type="entry name" value="Arg_repressor"/>
    <property type="match status" value="1"/>
</dbReference>
<dbReference type="Pfam" id="PF02863">
    <property type="entry name" value="Arg_repressor_C"/>
    <property type="match status" value="1"/>
</dbReference>
<dbReference type="PRINTS" id="PR01467">
    <property type="entry name" value="ARGREPRESSOR"/>
</dbReference>
<dbReference type="SUPFAM" id="SSF55252">
    <property type="entry name" value="C-terminal domain of arginine repressor"/>
    <property type="match status" value="1"/>
</dbReference>
<dbReference type="SUPFAM" id="SSF46785">
    <property type="entry name" value="Winged helix' DNA-binding domain"/>
    <property type="match status" value="1"/>
</dbReference>
<gene>
    <name evidence="1" type="primary">argR</name>
    <name type="ordered locus">Acid_2503</name>
</gene>
<protein>
    <recommendedName>
        <fullName evidence="1">Arginine repressor</fullName>
    </recommendedName>
</protein>
<reference key="1">
    <citation type="journal article" date="2009" name="Appl. Environ. Microbiol.">
        <title>Three genomes from the phylum Acidobacteria provide insight into the lifestyles of these microorganisms in soils.</title>
        <authorList>
            <person name="Ward N.L."/>
            <person name="Challacombe J.F."/>
            <person name="Janssen P.H."/>
            <person name="Henrissat B."/>
            <person name="Coutinho P.M."/>
            <person name="Wu M."/>
            <person name="Xie G."/>
            <person name="Haft D.H."/>
            <person name="Sait M."/>
            <person name="Badger J."/>
            <person name="Barabote R.D."/>
            <person name="Bradley B."/>
            <person name="Brettin T.S."/>
            <person name="Brinkac L.M."/>
            <person name="Bruce D."/>
            <person name="Creasy T."/>
            <person name="Daugherty S.C."/>
            <person name="Davidsen T.M."/>
            <person name="DeBoy R.T."/>
            <person name="Detter J.C."/>
            <person name="Dodson R.J."/>
            <person name="Durkin A.S."/>
            <person name="Ganapathy A."/>
            <person name="Gwinn-Giglio M."/>
            <person name="Han C.S."/>
            <person name="Khouri H."/>
            <person name="Kiss H."/>
            <person name="Kothari S.P."/>
            <person name="Madupu R."/>
            <person name="Nelson K.E."/>
            <person name="Nelson W.C."/>
            <person name="Paulsen I."/>
            <person name="Penn K."/>
            <person name="Ren Q."/>
            <person name="Rosovitz M.J."/>
            <person name="Selengut J.D."/>
            <person name="Shrivastava S."/>
            <person name="Sullivan S.A."/>
            <person name="Tapia R."/>
            <person name="Thompson L.S."/>
            <person name="Watkins K.L."/>
            <person name="Yang Q."/>
            <person name="Yu C."/>
            <person name="Zafar N."/>
            <person name="Zhou L."/>
            <person name="Kuske C.R."/>
        </authorList>
    </citation>
    <scope>NUCLEOTIDE SEQUENCE [LARGE SCALE GENOMIC DNA]</scope>
    <source>
        <strain>Ellin6076</strain>
    </source>
</reference>
<feature type="chain" id="PRO_1000023602" description="Arginine repressor">
    <location>
        <begin position="1"/>
        <end position="145"/>
    </location>
</feature>
<organism>
    <name type="scientific">Solibacter usitatus (strain Ellin6076)</name>
    <dbReference type="NCBI Taxonomy" id="234267"/>
    <lineage>
        <taxon>Bacteria</taxon>
        <taxon>Pseudomonadati</taxon>
        <taxon>Acidobacteriota</taxon>
        <taxon>Terriglobia</taxon>
        <taxon>Bryobacterales</taxon>
        <taxon>Solibacteraceae</taxon>
        <taxon>Candidatus Solibacter</taxon>
    </lineage>
</organism>
<accession>Q024T4</accession>
<proteinExistence type="inferred from homology"/>